<organism>
    <name type="scientific">Mus musculus</name>
    <name type="common">Mouse</name>
    <dbReference type="NCBI Taxonomy" id="10090"/>
    <lineage>
        <taxon>Eukaryota</taxon>
        <taxon>Metazoa</taxon>
        <taxon>Chordata</taxon>
        <taxon>Craniata</taxon>
        <taxon>Vertebrata</taxon>
        <taxon>Euteleostomi</taxon>
        <taxon>Mammalia</taxon>
        <taxon>Eutheria</taxon>
        <taxon>Euarchontoglires</taxon>
        <taxon>Glires</taxon>
        <taxon>Rodentia</taxon>
        <taxon>Myomorpha</taxon>
        <taxon>Muroidea</taxon>
        <taxon>Muridae</taxon>
        <taxon>Murinae</taxon>
        <taxon>Mus</taxon>
        <taxon>Mus</taxon>
    </lineage>
</organism>
<name>CNGB1_MOUSE</name>
<reference key="1">
    <citation type="journal article" date="2009" name="J. Cell Sci.">
        <title>Knockout of GARPs and the beta-subunit of the rod cGMP-gated channel disrupts disk morphogenesis and rod outer segment structural integrity.</title>
        <authorList>
            <person name="Zhang Y."/>
            <person name="Molday L.L."/>
            <person name="Molday R.S."/>
            <person name="Sarfare S.S."/>
            <person name="Woodruff M.L."/>
            <person name="Fain G.L."/>
            <person name="Kraft T.W."/>
            <person name="Pittler S.J."/>
        </authorList>
    </citation>
    <scope>NUCLEOTIDE SEQUENCE [MRNA]</scope>
    <source>
        <strain>129/SvEv</strain>
        <tissue>Eye</tissue>
    </source>
</reference>
<reference key="2">
    <citation type="journal article" date="2009" name="PLoS Biol.">
        <title>Lineage-specific biology revealed by a finished genome assembly of the mouse.</title>
        <authorList>
            <person name="Church D.M."/>
            <person name="Goodstadt L."/>
            <person name="Hillier L.W."/>
            <person name="Zody M.C."/>
            <person name="Goldstein S."/>
            <person name="She X."/>
            <person name="Bult C.J."/>
            <person name="Agarwala R."/>
            <person name="Cherry J.L."/>
            <person name="DiCuccio M."/>
            <person name="Hlavina W."/>
            <person name="Kapustin Y."/>
            <person name="Meric P."/>
            <person name="Maglott D."/>
            <person name="Birtle Z."/>
            <person name="Marques A.C."/>
            <person name="Graves T."/>
            <person name="Zhou S."/>
            <person name="Teague B."/>
            <person name="Potamousis K."/>
            <person name="Churas C."/>
            <person name="Place M."/>
            <person name="Herschleb J."/>
            <person name="Runnheim R."/>
            <person name="Forrest D."/>
            <person name="Amos-Landgraf J."/>
            <person name="Schwartz D.C."/>
            <person name="Cheng Z."/>
            <person name="Lindblad-Toh K."/>
            <person name="Eichler E.E."/>
            <person name="Ponting C.P."/>
        </authorList>
    </citation>
    <scope>NUCLEOTIDE SEQUENCE [LARGE SCALE GENOMIC DNA]</scope>
    <source>
        <strain>C57BL/6J</strain>
    </source>
</reference>
<reference key="3">
    <citation type="journal article" date="2001" name="Science">
        <title>Nomenclature for ion channel subunits.</title>
        <authorList>
            <person name="Bradley J."/>
            <person name="Frings S."/>
            <person name="Yau K.W."/>
            <person name="Reed R."/>
        </authorList>
    </citation>
    <scope>NOMENCLATURE</scope>
</reference>
<reference key="4">
    <citation type="journal article" date="2005" name="J. Neurosci.">
        <title>Impaired channel targeting and retinal degeneration in mice lacking the cyclic nucleotide-gated channel subunit CNGB1.</title>
        <authorList>
            <person name="Huettl S."/>
            <person name="Michalakis S."/>
            <person name="Seeliger M."/>
            <person name="Luo D.G."/>
            <person name="Acar N."/>
            <person name="Geiger H."/>
            <person name="Hudl K."/>
            <person name="Mader R."/>
            <person name="Haverkamp S."/>
            <person name="Moser M."/>
            <person name="Pfeifer A."/>
            <person name="Gerstner A."/>
            <person name="Yau K.W."/>
            <person name="Biel M."/>
        </authorList>
    </citation>
    <scope>DISRUPTION PHENOTYPE</scope>
</reference>
<reference key="5">
    <citation type="journal article" date="2006" name="J. Biol. Chem.">
        <title>Loss of CNGB1 protein leads to olfactory dysfunction and subciliary cyclic nucleotide-gated channel trapping.</title>
        <authorList>
            <person name="Michalakis S."/>
            <person name="Reisert J."/>
            <person name="Geiger H."/>
            <person name="Wetzel C."/>
            <person name="Zong X."/>
            <person name="Bradley J."/>
            <person name="Spehr M."/>
            <person name="Huettl S."/>
            <person name="Gerstner A."/>
            <person name="Pfeifer A."/>
            <person name="Hatt H."/>
            <person name="Yau K.W."/>
            <person name="Biel M."/>
        </authorList>
    </citation>
    <scope>FUNCTION</scope>
    <scope>TRANSPORTER ACTIVITY</scope>
    <scope>SUBCELLULAR LOCATION</scope>
    <scope>TISSUE SPECIFICITY</scope>
    <scope>DISRUPTION PHENOTYPE</scope>
</reference>
<reference key="6">
    <citation type="journal article" date="2012" name="Hum. Mol. Genet.">
        <title>Gene therapy restores vision and delays degeneration in the CNGB1(-/-) mouse model of retinitis pigmentosa.</title>
        <authorList>
            <person name="Koch S."/>
            <person name="Sothilingam V."/>
            <person name="Garcia Garrido M."/>
            <person name="Tanimoto N."/>
            <person name="Becirovic E."/>
            <person name="Koch F."/>
            <person name="Seide C."/>
            <person name="Beck S.C."/>
            <person name="Seeliger M.W."/>
            <person name="Biel M."/>
            <person name="Muehlfriedel R."/>
            <person name="Michalakis S."/>
        </authorList>
    </citation>
    <scope>FUNCTION</scope>
    <scope>TISSUE SPECIFICITY</scope>
</reference>
<comment type="function">
    <text evidence="1 3 4 9 10">Pore-forming subunit of the rod cyclic nucleotide-gated channel. Mediates rod photoresponses at dim light converting transient changes in intracellular cGMP levels into electrical signals. In the dark, cGMP levels are high and keep the channel open enabling a steady inward current carried by Na(+) and Ca(2+) ions that leads to membrane depolarization and neurotransmitter release from synaptic terminals. Upon photon absorption cGMP levels decline leading to channel closure and membrane hyperpolarization that ultimately slows neurotransmitter release and signals the presence of light, the end point of the phototransduction cascade (By similarity) (PubMed:22802073). Pore-forming subunit of the olfactory cyclic nucleotide-gated channel. Operates in the cilia of olfactory sensory neurons where chemical stimulation of the odorant is converted to an electrical signal. Mediates odorant-induced cAMP-dependent Ca(2+) influx triggering neuron depolarization. The rise of intracellular Ca(2+) levels potentiates the olfactory response by activating Ca(2+)-dependent Cl(-) channels, but it also serves as a negative feedback signal to desensitize the channel for rapid adaptation to odorants (By similarity) (PubMed:16980309). Conducts cGMP- and cAMP-gated ion currents, with permeability for monovalent and divalent cations. The selectivity for Ca(2+) over Na(+) increases with cGMP concentrations, whereas the selectivity among monovalent ions is independent of the cGMP levels (By similarity).</text>
</comment>
<comment type="catalytic activity">
    <reaction evidence="3 13">
        <text>Ca(2+)(in) = Ca(2+)(out)</text>
        <dbReference type="Rhea" id="RHEA:29671"/>
        <dbReference type="ChEBI" id="CHEBI:29108"/>
    </reaction>
</comment>
<comment type="catalytic activity">
    <reaction evidence="3">
        <text>Na(+)(in) = Na(+)(out)</text>
        <dbReference type="Rhea" id="RHEA:34963"/>
        <dbReference type="ChEBI" id="CHEBI:29101"/>
    </reaction>
</comment>
<comment type="catalytic activity">
    <reaction evidence="1 4">
        <text>K(+)(in) = K(+)(out)</text>
        <dbReference type="Rhea" id="RHEA:29463"/>
        <dbReference type="ChEBI" id="CHEBI:29103"/>
    </reaction>
</comment>
<comment type="catalytic activity">
    <reaction evidence="3">
        <text>NH4(+)(in) = NH4(+)(out)</text>
        <dbReference type="Rhea" id="RHEA:28747"/>
        <dbReference type="ChEBI" id="CHEBI:28938"/>
    </reaction>
</comment>
<comment type="catalytic activity">
    <reaction evidence="4">
        <text>Rb(+)(in) = Rb(+)(out)</text>
        <dbReference type="Rhea" id="RHEA:78547"/>
        <dbReference type="ChEBI" id="CHEBI:49847"/>
    </reaction>
</comment>
<comment type="catalytic activity">
    <reaction evidence="4">
        <text>Li(+)(in) = Li(+)(out)</text>
        <dbReference type="Rhea" id="RHEA:78551"/>
        <dbReference type="ChEBI" id="CHEBI:49713"/>
    </reaction>
</comment>
<comment type="catalytic activity">
    <reaction evidence="3">
        <text>Cs(+)(in) = Cs(+)(out)</text>
        <dbReference type="Rhea" id="RHEA:78555"/>
        <dbReference type="ChEBI" id="CHEBI:49547"/>
    </reaction>
</comment>
<comment type="subcellular location">
    <subcellularLocation>
        <location evidence="9">Cell projection</location>
        <location evidence="9">Cilium membrane</location>
        <topology evidence="5">Multi-pass membrane protein</topology>
    </subcellularLocation>
</comment>
<comment type="tissue specificity">
    <text evidence="9 10">Rod outer segments (PubMed:22802073). Olfactory sensory neurons (PubMed:16980309).</text>
</comment>
<comment type="disruption phenotype">
    <text evidence="8 9">Mice are born at the expected Mendelian ratio. They showed increased postnatal mortality and reduced body weight associated with impaired olfactory responses. Deficient mice displayed undetectable rod-specific photoresponses, developed progressive rod degeneration and were devoid of both rods and cones at the age of 1-year, a phenotype reminiscent of retinitis pigmentosa in humans.</text>
</comment>
<comment type="similarity">
    <text evidence="12">Belongs to the cyclic nucleotide-gated cation channel (TC 1.A.1.5) family. CNGB1 subfamily.</text>
</comment>
<dbReference type="EMBL" id="HQ116386">
    <property type="protein sequence ID" value="ADM45272.1"/>
    <property type="molecule type" value="mRNA"/>
</dbReference>
<dbReference type="CCDS" id="CCDS72151.1"/>
<dbReference type="RefSeq" id="NP_001182342.1">
    <property type="nucleotide sequence ID" value="NM_001195413.1"/>
</dbReference>
<dbReference type="SMR" id="E1AZ71"/>
<dbReference type="FunCoup" id="E1AZ71">
    <property type="interactions" value="1483"/>
</dbReference>
<dbReference type="STRING" id="10090.ENSMUSP00000113827"/>
<dbReference type="PhosphoSitePlus" id="E1AZ71"/>
<dbReference type="ProteomicsDB" id="341490"/>
<dbReference type="Antibodypedia" id="48567">
    <property type="antibodies" value="106 antibodies from 21 providers"/>
</dbReference>
<dbReference type="DNASU" id="333329"/>
<dbReference type="Ensembl" id="ENSMUST00000119870.9">
    <property type="protein sequence ID" value="ENSMUSP00000113827.3"/>
    <property type="gene ID" value="ENSMUSG00000031789.18"/>
</dbReference>
<dbReference type="GeneID" id="333329"/>
<dbReference type="KEGG" id="mmu:333329"/>
<dbReference type="UCSC" id="uc009myb.2">
    <property type="organism name" value="mouse"/>
</dbReference>
<dbReference type="AGR" id="MGI:2664102"/>
<dbReference type="CTD" id="1258"/>
<dbReference type="MGI" id="MGI:2664102">
    <property type="gene designation" value="Cngb1"/>
</dbReference>
<dbReference type="VEuPathDB" id="HostDB:ENSMUSG00000031789"/>
<dbReference type="eggNOG" id="KOG0499">
    <property type="taxonomic scope" value="Eukaryota"/>
</dbReference>
<dbReference type="GeneTree" id="ENSGT00940000154824"/>
<dbReference type="HOGENOM" id="CLU_005746_11_0_1"/>
<dbReference type="OrthoDB" id="421226at2759"/>
<dbReference type="TreeFam" id="TF318250"/>
<dbReference type="Reactome" id="R-MMU-2485179">
    <property type="pathway name" value="Activation of the phototransduction cascade"/>
</dbReference>
<dbReference type="Reactome" id="R-MMU-2514859">
    <property type="pathway name" value="Inactivation, recovery and regulation of the phototransduction cascade"/>
</dbReference>
<dbReference type="Reactome" id="R-MMU-5620916">
    <property type="pathway name" value="VxPx cargo-targeting to cilium"/>
</dbReference>
<dbReference type="BioGRID-ORCS" id="333329">
    <property type="hits" value="5 hits in 79 CRISPR screens"/>
</dbReference>
<dbReference type="ChiTaRS" id="Cngb1">
    <property type="organism name" value="mouse"/>
</dbReference>
<dbReference type="Proteomes" id="UP000000589">
    <property type="component" value="Chromosome 8"/>
</dbReference>
<dbReference type="RNAct" id="E1AZ71">
    <property type="molecule type" value="protein"/>
</dbReference>
<dbReference type="Bgee" id="ENSMUSG00000031789">
    <property type="expression patterns" value="Expressed in retinal neural layer and 76 other cell types or tissues"/>
</dbReference>
<dbReference type="ExpressionAtlas" id="E1AZ71">
    <property type="expression patterns" value="baseline and differential"/>
</dbReference>
<dbReference type="GO" id="GO:0017071">
    <property type="term" value="C:intracellular cyclic nucleotide activated cation channel complex"/>
    <property type="evidence" value="ECO:0007669"/>
    <property type="project" value="Ensembl"/>
</dbReference>
<dbReference type="GO" id="GO:0016020">
    <property type="term" value="C:membrane"/>
    <property type="evidence" value="ECO:0000314"/>
    <property type="project" value="MGI"/>
</dbReference>
<dbReference type="GO" id="GO:0098804">
    <property type="term" value="C:non-motile cilium membrane"/>
    <property type="evidence" value="ECO:0000314"/>
    <property type="project" value="UniProtKB"/>
</dbReference>
<dbReference type="GO" id="GO:0001750">
    <property type="term" value="C:photoreceptor outer segment"/>
    <property type="evidence" value="ECO:0000314"/>
    <property type="project" value="MGI"/>
</dbReference>
<dbReference type="GO" id="GO:0120200">
    <property type="term" value="C:rod photoreceptor outer segment"/>
    <property type="evidence" value="ECO:0000314"/>
    <property type="project" value="UniProtKB"/>
</dbReference>
<dbReference type="GO" id="GO:0043195">
    <property type="term" value="C:terminal bouton"/>
    <property type="evidence" value="ECO:0007669"/>
    <property type="project" value="Ensembl"/>
</dbReference>
<dbReference type="GO" id="GO:0005262">
    <property type="term" value="F:calcium channel activity"/>
    <property type="evidence" value="ECO:0007669"/>
    <property type="project" value="UniProtKB-KW"/>
</dbReference>
<dbReference type="GO" id="GO:0030552">
    <property type="term" value="F:cAMP binding"/>
    <property type="evidence" value="ECO:0000250"/>
    <property type="project" value="UniProtKB"/>
</dbReference>
<dbReference type="GO" id="GO:0030553">
    <property type="term" value="F:cGMP binding"/>
    <property type="evidence" value="ECO:0000250"/>
    <property type="project" value="UniProtKB"/>
</dbReference>
<dbReference type="GO" id="GO:0043855">
    <property type="term" value="F:cyclic nucleotide-activated monoatomic ion channel activity"/>
    <property type="evidence" value="ECO:0000315"/>
    <property type="project" value="ARUK-UCL"/>
</dbReference>
<dbReference type="GO" id="GO:0005222">
    <property type="term" value="F:intracellularly cAMP-activated cation channel activity"/>
    <property type="evidence" value="ECO:0000250"/>
    <property type="project" value="UniProtKB"/>
</dbReference>
<dbReference type="GO" id="GO:0005223">
    <property type="term" value="F:intracellularly cGMP-activated cation channel activity"/>
    <property type="evidence" value="ECO:0000250"/>
    <property type="project" value="UniProtKB"/>
</dbReference>
<dbReference type="GO" id="GO:0044877">
    <property type="term" value="F:protein-containing complex binding"/>
    <property type="evidence" value="ECO:0007669"/>
    <property type="project" value="Ensembl"/>
</dbReference>
<dbReference type="GO" id="GO:0005272">
    <property type="term" value="F:sodium channel activity"/>
    <property type="evidence" value="ECO:0007669"/>
    <property type="project" value="UniProtKB-KW"/>
</dbReference>
<dbReference type="GO" id="GO:0006816">
    <property type="term" value="P:calcium ion transport"/>
    <property type="evidence" value="ECO:0000250"/>
    <property type="project" value="UniProtKB"/>
</dbReference>
<dbReference type="GO" id="GO:0050911">
    <property type="term" value="P:detection of chemical stimulus involved in sensory perception of smell"/>
    <property type="evidence" value="ECO:0000315"/>
    <property type="project" value="ARUK-UCL"/>
</dbReference>
<dbReference type="GO" id="GO:0050908">
    <property type="term" value="P:detection of light stimulus involved in visual perception"/>
    <property type="evidence" value="ECO:0007669"/>
    <property type="project" value="Ensembl"/>
</dbReference>
<dbReference type="GO" id="GO:0007186">
    <property type="term" value="P:G protein-coupled receptor signaling pathway"/>
    <property type="evidence" value="ECO:0000315"/>
    <property type="project" value="ARUK-UCL"/>
</dbReference>
<dbReference type="GO" id="GO:0051899">
    <property type="term" value="P:membrane depolarization"/>
    <property type="evidence" value="ECO:0000315"/>
    <property type="project" value="ARUK-UCL"/>
</dbReference>
<dbReference type="GO" id="GO:0021630">
    <property type="term" value="P:olfactory nerve maturation"/>
    <property type="evidence" value="ECO:0000315"/>
    <property type="project" value="ARUK-UCL"/>
</dbReference>
<dbReference type="GO" id="GO:0045494">
    <property type="term" value="P:photoreceptor cell maintenance"/>
    <property type="evidence" value="ECO:0000315"/>
    <property type="project" value="MGI"/>
</dbReference>
<dbReference type="GO" id="GO:0035845">
    <property type="term" value="P:photoreceptor cell outer segment organization"/>
    <property type="evidence" value="ECO:0000315"/>
    <property type="project" value="MGI"/>
</dbReference>
<dbReference type="GO" id="GO:0007602">
    <property type="term" value="P:phototransduction"/>
    <property type="evidence" value="ECO:0000315"/>
    <property type="project" value="MGI"/>
</dbReference>
<dbReference type="GO" id="GO:0010628">
    <property type="term" value="P:positive regulation of gene expression"/>
    <property type="evidence" value="ECO:0000315"/>
    <property type="project" value="ARUK-UCL"/>
</dbReference>
<dbReference type="GO" id="GO:0006813">
    <property type="term" value="P:potassium ion transport"/>
    <property type="evidence" value="ECO:0000250"/>
    <property type="project" value="UniProtKB"/>
</dbReference>
<dbReference type="GO" id="GO:0033365">
    <property type="term" value="P:protein localization to organelle"/>
    <property type="evidence" value="ECO:0000315"/>
    <property type="project" value="MGI"/>
</dbReference>
<dbReference type="GO" id="GO:0051480">
    <property type="term" value="P:regulation of cytosolic calcium ion concentration"/>
    <property type="evidence" value="ECO:0007669"/>
    <property type="project" value="Ensembl"/>
</dbReference>
<dbReference type="GO" id="GO:1990834">
    <property type="term" value="P:response to odorant"/>
    <property type="evidence" value="ECO:0000315"/>
    <property type="project" value="ARUK-UCL"/>
</dbReference>
<dbReference type="GO" id="GO:0007608">
    <property type="term" value="P:sensory perception of smell"/>
    <property type="evidence" value="ECO:0000315"/>
    <property type="project" value="MGI"/>
</dbReference>
<dbReference type="GO" id="GO:0006814">
    <property type="term" value="P:sodium ion transport"/>
    <property type="evidence" value="ECO:0000250"/>
    <property type="project" value="UniProtKB"/>
</dbReference>
<dbReference type="GO" id="GO:0007601">
    <property type="term" value="P:visual perception"/>
    <property type="evidence" value="ECO:0000315"/>
    <property type="project" value="UniProtKB"/>
</dbReference>
<dbReference type="CDD" id="cd00038">
    <property type="entry name" value="CAP_ED"/>
    <property type="match status" value="1"/>
</dbReference>
<dbReference type="FunFam" id="1.10.287.70:FF:000072">
    <property type="entry name" value="Cyclic nucleotide gated channel beta 3"/>
    <property type="match status" value="1"/>
</dbReference>
<dbReference type="FunFam" id="1.10.287.630:FF:000001">
    <property type="entry name" value="Cyclic nucleotide-gated channel alpha 3"/>
    <property type="match status" value="1"/>
</dbReference>
<dbReference type="FunFam" id="2.60.120.10:FF:000020">
    <property type="entry name" value="Cyclic nucleotide-gated channel beta 3"/>
    <property type="match status" value="1"/>
</dbReference>
<dbReference type="Gene3D" id="1.10.287.70">
    <property type="match status" value="1"/>
</dbReference>
<dbReference type="Gene3D" id="1.10.287.630">
    <property type="entry name" value="Helix hairpin bin"/>
    <property type="match status" value="1"/>
</dbReference>
<dbReference type="Gene3D" id="2.60.120.10">
    <property type="entry name" value="Jelly Rolls"/>
    <property type="match status" value="1"/>
</dbReference>
<dbReference type="InterPro" id="IPR050866">
    <property type="entry name" value="CNG_cation_channel"/>
</dbReference>
<dbReference type="InterPro" id="IPR018488">
    <property type="entry name" value="cNMP-bd_CS"/>
</dbReference>
<dbReference type="InterPro" id="IPR000595">
    <property type="entry name" value="cNMP-bd_dom"/>
</dbReference>
<dbReference type="InterPro" id="IPR018490">
    <property type="entry name" value="cNMP-bd_dom_sf"/>
</dbReference>
<dbReference type="InterPro" id="IPR014710">
    <property type="entry name" value="RmlC-like_jellyroll"/>
</dbReference>
<dbReference type="PANTHER" id="PTHR45638:SF16">
    <property type="entry name" value="CYCLIC NUCLEOTIDE-GATED CATION CHANNEL BETA-1"/>
    <property type="match status" value="1"/>
</dbReference>
<dbReference type="PANTHER" id="PTHR45638">
    <property type="entry name" value="CYCLIC NUCLEOTIDE-GATED CATION CHANNEL SUBUNIT A"/>
    <property type="match status" value="1"/>
</dbReference>
<dbReference type="Pfam" id="PF00027">
    <property type="entry name" value="cNMP_binding"/>
    <property type="match status" value="1"/>
</dbReference>
<dbReference type="SMART" id="SM00100">
    <property type="entry name" value="cNMP"/>
    <property type="match status" value="1"/>
</dbReference>
<dbReference type="SUPFAM" id="SSF51206">
    <property type="entry name" value="cAMP-binding domain-like"/>
    <property type="match status" value="1"/>
</dbReference>
<dbReference type="SUPFAM" id="SSF81324">
    <property type="entry name" value="Voltage-gated potassium channels"/>
    <property type="match status" value="1"/>
</dbReference>
<dbReference type="PROSITE" id="PS00888">
    <property type="entry name" value="CNMP_BINDING_1"/>
    <property type="match status" value="1"/>
</dbReference>
<dbReference type="PROSITE" id="PS00889">
    <property type="entry name" value="CNMP_BINDING_2"/>
    <property type="match status" value="1"/>
</dbReference>
<dbReference type="PROSITE" id="PS50042">
    <property type="entry name" value="CNMP_BINDING_3"/>
    <property type="match status" value="1"/>
</dbReference>
<protein>
    <recommendedName>
        <fullName>Cyclic nucleotide-gated channel beta-1</fullName>
    </recommendedName>
    <alternativeName>
        <fullName>Cyclic nucleotide-gated cation channel 4</fullName>
        <shortName>CNG channel 4</shortName>
        <shortName>CNG-4</shortName>
        <shortName evidence="11">CNG4</shortName>
    </alternativeName>
</protein>
<keyword id="KW-0106">Calcium</keyword>
<keyword id="KW-0107">Calcium channel</keyword>
<keyword id="KW-0109">Calcium transport</keyword>
<keyword id="KW-0114">cAMP</keyword>
<keyword id="KW-0116">cAMP-binding</keyword>
<keyword id="KW-1003">Cell membrane</keyword>
<keyword id="KW-0966">Cell projection</keyword>
<keyword id="KW-0140">cGMP</keyword>
<keyword id="KW-0142">cGMP-binding</keyword>
<keyword id="KW-0407">Ion channel</keyword>
<keyword id="KW-0406">Ion transport</keyword>
<keyword id="KW-1071">Ligand-gated ion channel</keyword>
<keyword id="KW-0472">Membrane</keyword>
<keyword id="KW-0547">Nucleotide-binding</keyword>
<keyword id="KW-0552">Olfaction</keyword>
<keyword id="KW-1185">Reference proteome</keyword>
<keyword id="KW-0716">Sensory transduction</keyword>
<keyword id="KW-0915">Sodium</keyword>
<keyword id="KW-0894">Sodium channel</keyword>
<keyword id="KW-0739">Sodium transport</keyword>
<keyword id="KW-0812">Transmembrane</keyword>
<keyword id="KW-1133">Transmembrane helix</keyword>
<keyword id="KW-0813">Transport</keyword>
<keyword id="KW-0844">Vision</keyword>
<gene>
    <name evidence="11 14" type="primary">Cngb1</name>
</gene>
<evidence type="ECO:0000250" key="1">
    <source>
        <dbReference type="UniProtKB" id="A0A8I5ZN27"/>
    </source>
</evidence>
<evidence type="ECO:0000250" key="2">
    <source>
        <dbReference type="UniProtKB" id="Q14028"/>
    </source>
</evidence>
<evidence type="ECO:0000250" key="3">
    <source>
        <dbReference type="UniProtKB" id="Q28181"/>
    </source>
</evidence>
<evidence type="ECO:0000250" key="4">
    <source>
        <dbReference type="UniProtKB" id="Q9NQW8"/>
    </source>
</evidence>
<evidence type="ECO:0000255" key="5"/>
<evidence type="ECO:0000255" key="6">
    <source>
        <dbReference type="PROSITE-ProRule" id="PRU00060"/>
    </source>
</evidence>
<evidence type="ECO:0000256" key="7">
    <source>
        <dbReference type="SAM" id="MobiDB-lite"/>
    </source>
</evidence>
<evidence type="ECO:0000269" key="8">
    <source>
    </source>
</evidence>
<evidence type="ECO:0000269" key="9">
    <source>
    </source>
</evidence>
<evidence type="ECO:0000269" key="10">
    <source>
    </source>
</evidence>
<evidence type="ECO:0000303" key="11">
    <source>
    </source>
</evidence>
<evidence type="ECO:0000305" key="12"/>
<evidence type="ECO:0000305" key="13">
    <source>
    </source>
</evidence>
<evidence type="ECO:0000312" key="14">
    <source>
        <dbReference type="MGI" id="MGI:2664102"/>
    </source>
</evidence>
<proteinExistence type="evidence at transcript level"/>
<accession>E1AZ71</accession>
<sequence>MLGWVQRVLPQPPGTPQKTVETAGPQPETESKPEANPQPEPEPQQEPEPEPEPEPEPEPEPEPEPEPEPEPEPEPVPEEAPPEVQALPPEEPMEGEGEAEAGPSLQETQVADPAQPTSQAQVAVAKVNRPSSWMLSWFWRGMQKVVPQPVCSNGGQNLAAGERDPDQGGAQIPEPCGTGDPGSAEASGTQDTEPSLWLLRWLEQNLEKVLPQPPPPSLAWKVEPEAAVLDPDPPGTPMQMEPTESPSQPNPGPLEPEEEPAAEPQPGFQSSSLPPPGDPVRLIEWLLHRLEMALPQPVLHGKAAEQEPGCPGMCDVQTISILPVEQVEHDLVLEEVDSCWEDAQQEDGASPQETEVAPAHEEESEAIVEIPRELTKIQEEREDEQEEDEEEKEEEKKKGEEEKEKEEEEKEKEKEKEEEKEEEEKEEEEEEEKEEEEEEKEEEEKEEEEKEEEEEEEEEEEEPIVLLDSCLVVQADVDECQLERTPSELASIQELPEEKEEKEEEKEEEKEEEEEKKEEEVEKKEEGEATNSTVPATKEHPELQVEDTDADSGPLIPEETLPPPERPPPSPVKSDTLTVPGAAAAGHRKKLPSQDDEAEELKALSPAESPVVAWSDPTTPQEADGQDRAASTASQNSAIINDRLQELVKMFKERTEKVKEKLIDPDVTSDEESPKPSPAKKAPEPDPAQKPAEAEVAEEEHYCDMLCCKFKRRPLKMYRFPQSIDPLTNLMYILWLFFVVLAWNWNCWLIPVRWAFPYQRADNIHFWLLMDYLCDFIYLLDITVFQMRLQFVKGGDIITDKKEMRNNYLKSRRFKMDLLCLLPLDFLYLKLGINPLLRLPRCLKYMAFFEFNNRLEAILSKAYVYRVIRTTAYLLYSLHLNSCLYYWASAFQGIGSTHWVYDGVGNSYIRCYYWAVKTLITIGGLPDPQTLFEIVFQLLNYFTGVFAFSVMIGQMRDVVGAATAGQTYYRSCMDSTVKYMNFYKIPRSVQNRVKTWYEYTWHSQGMLDESELMVQLPDKMRLDLAIDVNYSIVSKVALFQGCDRQMIFDMLKRLRSVVYLPNDYVCKKGEIGREMYIIQAGQVQVLGGPDGKAVLVTLKAGSVFGEISLLAVGGGNRRTANVVAHGFTNLFILDKKDLNEILVHYPESQKLLRKKARRMLRNNNKPKEEKSVLILPPRAGTPKLFNAALAAAGKMGPRGAKGGKLAHLRARLKELAALEAAARQQQLLEQAKSSQEAGGEEGSGATDQPAPQEPPEPKDPPKPPGPPEPSAQSSPPPASAKPEESTGEAAGPPEPSVRIRVSPGPDPGEQTLSVEVLEEKKEGAE</sequence>
<feature type="chain" id="PRO_0000460350" description="Cyclic nucleotide-gated channel beta-1">
    <location>
        <begin position="1"/>
        <end position="1325"/>
    </location>
</feature>
<feature type="topological domain" description="Cytoplasmic" evidence="12">
    <location>
        <begin position="1"/>
        <end position="732"/>
    </location>
</feature>
<feature type="transmembrane region" description="Helical; Name=S1" evidence="2">
    <location>
        <begin position="733"/>
        <end position="754"/>
    </location>
</feature>
<feature type="topological domain" description="Extracellular" evidence="12">
    <location>
        <begin position="755"/>
        <end position="763"/>
    </location>
</feature>
<feature type="transmembrane region" description="Helical; Name=S2" evidence="2">
    <location>
        <begin position="764"/>
        <end position="785"/>
    </location>
</feature>
<feature type="topological domain" description="Cytoplasmic" evidence="12">
    <location>
        <begin position="786"/>
        <end position="800"/>
    </location>
</feature>
<feature type="transmembrane region" description="Helical; Name=S3" evidence="2">
    <location>
        <begin position="801"/>
        <end position="820"/>
    </location>
</feature>
<feature type="topological domain" description="Extracellular" evidence="12">
    <location>
        <begin position="821"/>
        <end position="836"/>
    </location>
</feature>
<feature type="transmembrane region" description="Helical; Name=S4" evidence="2">
    <location>
        <begin position="837"/>
        <end position="849"/>
    </location>
</feature>
<feature type="topological domain" description="Cytoplasmic" evidence="12">
    <location>
        <begin position="850"/>
        <end position="861"/>
    </location>
</feature>
<feature type="transmembrane region" description="Helical; Name=S5" evidence="2">
    <location>
        <begin position="862"/>
        <end position="884"/>
    </location>
</feature>
<feature type="topological domain" description="Extracellular" evidence="12">
    <location>
        <begin position="885"/>
        <end position="907"/>
    </location>
</feature>
<feature type="transmembrane region" description="Helical; Name=P-helix" evidence="2">
    <location>
        <begin position="908"/>
        <end position="934"/>
    </location>
</feature>
<feature type="transmembrane region" description="Helical; Name=S6" evidence="2">
    <location>
        <begin position="935"/>
        <end position="960"/>
    </location>
</feature>
<feature type="topological domain" description="Cytoplasmic" evidence="12">
    <location>
        <begin position="961"/>
        <end position="1325"/>
    </location>
</feature>
<feature type="region of interest" description="Disordered" evidence="7">
    <location>
        <begin position="1"/>
        <end position="124"/>
    </location>
</feature>
<feature type="region of interest" description="Disordered" evidence="7">
    <location>
        <begin position="147"/>
        <end position="198"/>
    </location>
</feature>
<feature type="region of interest" description="Disordered" evidence="7">
    <location>
        <begin position="227"/>
        <end position="279"/>
    </location>
</feature>
<feature type="region of interest" description="Disordered" evidence="7">
    <location>
        <begin position="340"/>
        <end position="470"/>
    </location>
</feature>
<feature type="region of interest" description="Disordered" evidence="7">
    <location>
        <begin position="482"/>
        <end position="637"/>
    </location>
</feature>
<feature type="region of interest" description="Calmodulin-binding CaM1" evidence="3">
    <location>
        <begin position="633"/>
        <end position="643"/>
    </location>
</feature>
<feature type="region of interest" description="Disordered" evidence="7">
    <location>
        <begin position="659"/>
        <end position="694"/>
    </location>
</feature>
<feature type="region of interest" description="Ion conduction pathway" evidence="2">
    <location>
        <begin position="862"/>
        <end position="961"/>
    </location>
</feature>
<feature type="region of interest" description="C-linker" evidence="2">
    <location>
        <begin position="964"/>
        <end position="1040"/>
    </location>
</feature>
<feature type="region of interest" description="cNMP-binding domain" evidence="6">
    <location>
        <begin position="1038"/>
        <end position="1142"/>
    </location>
</feature>
<feature type="region of interest" description="Cyclic nucleotide-binding domain" evidence="2">
    <location>
        <begin position="1044"/>
        <end position="1160"/>
    </location>
</feature>
<feature type="region of interest" description="Calmodulin-binding CaM2" evidence="3">
    <location>
        <begin position="1224"/>
        <end position="1230"/>
    </location>
</feature>
<feature type="region of interest" description="Disordered" evidence="7">
    <location>
        <begin position="1226"/>
        <end position="1325"/>
    </location>
</feature>
<feature type="compositionally biased region" description="Acidic residues" evidence="7">
    <location>
        <begin position="43"/>
        <end position="81"/>
    </location>
</feature>
<feature type="compositionally biased region" description="Polar residues" evidence="7">
    <location>
        <begin position="105"/>
        <end position="121"/>
    </location>
</feature>
<feature type="compositionally biased region" description="Basic and acidic residues" evidence="7">
    <location>
        <begin position="370"/>
        <end position="379"/>
    </location>
</feature>
<feature type="compositionally biased region" description="Acidic residues" evidence="7">
    <location>
        <begin position="380"/>
        <end position="393"/>
    </location>
</feature>
<feature type="compositionally biased region" description="Acidic residues" evidence="7">
    <location>
        <begin position="418"/>
        <end position="463"/>
    </location>
</feature>
<feature type="compositionally biased region" description="Acidic residues" evidence="7">
    <location>
        <begin position="495"/>
        <end position="517"/>
    </location>
</feature>
<feature type="compositionally biased region" description="Basic and acidic residues" evidence="7">
    <location>
        <begin position="518"/>
        <end position="527"/>
    </location>
</feature>
<feature type="compositionally biased region" description="Pro residues" evidence="7">
    <location>
        <begin position="560"/>
        <end position="571"/>
    </location>
</feature>
<feature type="compositionally biased region" description="Low complexity" evidence="7">
    <location>
        <begin position="1226"/>
        <end position="1250"/>
    </location>
</feature>
<feature type="compositionally biased region" description="Pro residues" evidence="7">
    <location>
        <begin position="1262"/>
        <end position="1279"/>
    </location>
</feature>
<feature type="binding site" evidence="2">
    <location>
        <position position="1105"/>
    </location>
    <ligand>
        <name>3',5'-cyclic GMP</name>
        <dbReference type="ChEBI" id="CHEBI:57746"/>
    </ligand>
</feature>
<feature type="binding site" evidence="2">
    <location>
        <position position="1106"/>
    </location>
    <ligand>
        <name>3',5'-cyclic GMP</name>
        <dbReference type="ChEBI" id="CHEBI:57746"/>
    </ligand>
</feature>
<feature type="binding site" evidence="2">
    <location>
        <position position="1108"/>
    </location>
    <ligand>
        <name>3',5'-cyclic GMP</name>
        <dbReference type="ChEBI" id="CHEBI:57746"/>
    </ligand>
</feature>
<feature type="binding site" evidence="2">
    <location>
        <position position="1118"/>
    </location>
    <ligand>
        <name>3',5'-cyclic AMP</name>
        <dbReference type="ChEBI" id="CHEBI:58165"/>
    </ligand>
</feature>
<feature type="binding site" evidence="2">
    <location>
        <position position="1118"/>
    </location>
    <ligand>
        <name>3',5'-cyclic GMP</name>
        <dbReference type="ChEBI" id="CHEBI:57746"/>
    </ligand>
</feature>
<feature type="binding site" evidence="2">
    <location>
        <position position="1119"/>
    </location>
    <ligand>
        <name>3',5'-cyclic GMP</name>
        <dbReference type="ChEBI" id="CHEBI:57746"/>
    </ligand>
</feature>
<feature type="site" description="Central gate" evidence="2">
    <location>
        <position position="948"/>
    </location>
</feature>
<feature type="site" description="Central gate" evidence="2">
    <location>
        <position position="952"/>
    </location>
</feature>
<feature type="site" description="Occludes the pore below the central gate" evidence="2">
    <location>
        <position position="956"/>
    </location>
</feature>